<protein>
    <recommendedName>
        <fullName>Probable isochorismatase</fullName>
        <ecNumber>3.3.2.1</ecNumber>
    </recommendedName>
    <alternativeName>
        <fullName>2,3 dihydro-2,3 dihydroxybenzoate synthase</fullName>
    </alternativeName>
</protein>
<proteinExistence type="inferred from homology"/>
<organism>
    <name type="scientific">Pseudomonas chlororaphis</name>
    <name type="common">Pseudomonas aureofaciens</name>
    <dbReference type="NCBI Taxonomy" id="333"/>
    <lineage>
        <taxon>Bacteria</taxon>
        <taxon>Pseudomonadati</taxon>
        <taxon>Pseudomonadota</taxon>
        <taxon>Gammaproteobacteria</taxon>
        <taxon>Pseudomonadales</taxon>
        <taxon>Pseudomonadaceae</taxon>
        <taxon>Pseudomonas</taxon>
    </lineage>
</organism>
<accession>Q51518</accession>
<feature type="chain" id="PRO_0000201825" description="Probable isochorismatase">
    <location>
        <begin position="1"/>
        <end position="207"/>
    </location>
</feature>
<reference key="1">
    <citation type="journal article" date="1995" name="FEMS Microbiol. Lett.">
        <title>Molecular analysis of genes encoding phenazine biosynthesis in the biological control bacterium. Pseudomonas aureofaciens 30-84.</title>
        <authorList>
            <person name="Pierson L.S. III"/>
            <person name="Gaffney T."/>
            <person name="Lam S."/>
            <person name="Gong F."/>
        </authorList>
    </citation>
    <scope>NUCLEOTIDE SEQUENCE [GENOMIC DNA]</scope>
    <source>
        <strain>30-84</strain>
    </source>
</reference>
<name>PHZA_PSECL</name>
<keyword id="KW-0045">Antibiotic biosynthesis</keyword>
<keyword id="KW-0378">Hydrolase</keyword>
<keyword id="KW-0843">Virulence</keyword>
<dbReference type="EC" id="3.3.2.1"/>
<dbReference type="EMBL" id="L48339">
    <property type="protein sequence ID" value="AAB00329.1"/>
    <property type="molecule type" value="Genomic_DNA"/>
</dbReference>
<dbReference type="SMR" id="Q51518"/>
<dbReference type="UniPathway" id="UPA00099"/>
<dbReference type="GO" id="GO:0008908">
    <property type="term" value="F:isochorismatase activity"/>
    <property type="evidence" value="ECO:0007669"/>
    <property type="project" value="UniProtKB-EC"/>
</dbReference>
<dbReference type="GO" id="GO:0002047">
    <property type="term" value="P:phenazine biosynthetic process"/>
    <property type="evidence" value="ECO:0007669"/>
    <property type="project" value="UniProtKB-UniPathway"/>
</dbReference>
<dbReference type="CDD" id="cd01013">
    <property type="entry name" value="isochorismatase"/>
    <property type="match status" value="1"/>
</dbReference>
<dbReference type="Gene3D" id="3.40.50.850">
    <property type="entry name" value="Isochorismatase-like"/>
    <property type="match status" value="1"/>
</dbReference>
<dbReference type="InterPro" id="IPR016291">
    <property type="entry name" value="Isochorismatase"/>
</dbReference>
<dbReference type="InterPro" id="IPR000868">
    <property type="entry name" value="Isochorismatase-like_dom"/>
</dbReference>
<dbReference type="InterPro" id="IPR050272">
    <property type="entry name" value="Isochorismatase-like_hydrls"/>
</dbReference>
<dbReference type="InterPro" id="IPR036380">
    <property type="entry name" value="Isochorismatase-like_sf"/>
</dbReference>
<dbReference type="PANTHER" id="PTHR43540:SF3">
    <property type="entry name" value="ENTEROBACTIN SYNTHASE COMPONENT B"/>
    <property type="match status" value="1"/>
</dbReference>
<dbReference type="PANTHER" id="PTHR43540">
    <property type="entry name" value="PEROXYUREIDOACRYLATE/UREIDOACRYLATE AMIDOHYDROLASE-RELATED"/>
    <property type="match status" value="1"/>
</dbReference>
<dbReference type="Pfam" id="PF00857">
    <property type="entry name" value="Isochorismatase"/>
    <property type="match status" value="1"/>
</dbReference>
<dbReference type="PIRSF" id="PIRSF001111">
    <property type="entry name" value="Isochorismatase"/>
    <property type="match status" value="1"/>
</dbReference>
<dbReference type="PRINTS" id="PR01398">
    <property type="entry name" value="ISCHRISMTASE"/>
</dbReference>
<dbReference type="SUPFAM" id="SSF52499">
    <property type="entry name" value="Isochorismatase-like hydrolases"/>
    <property type="match status" value="1"/>
</dbReference>
<sequence>MTGIPSIVPYALPTNRDLPVNLAQWSIDPERAVLLVHDMQRYFLRPLPDALRDEVVSNAARIRQWAADNGVPVAYTAQPGSMSEEQRGLLKDFWGPGMKASPADREVVGALTPKPGDWLLTKWRYSAFFNSDLLERMRANGRDQLILCGVYAHVGVLISTVDAYSNDIQPFLVADAIADFSKEHHWMAIEYAASRCAMVITTDEVVL</sequence>
<gene>
    <name type="primary">phzA</name>
</gene>
<evidence type="ECO:0000305" key="1"/>
<comment type="function">
    <text>Involved in the biosynthesis of the antibiotic phenazine, a nitrogen-containing heterocyclic molecule having important roles in virulence, competition and biological control. This isochorismatase may remove pyruvate from chorismate during the formation of the phenazine ring structure and/or stabilize the phenazine biosynthetic complex.</text>
</comment>
<comment type="catalytic activity">
    <reaction>
        <text>isochorismate + H2O = (2S,3S)-2,3-dihydroxy-2,3-dihydrobenzoate + pyruvate</text>
        <dbReference type="Rhea" id="RHEA:11112"/>
        <dbReference type="ChEBI" id="CHEBI:15361"/>
        <dbReference type="ChEBI" id="CHEBI:15377"/>
        <dbReference type="ChEBI" id="CHEBI:29780"/>
        <dbReference type="ChEBI" id="CHEBI:58764"/>
        <dbReference type="EC" id="3.3.2.1"/>
    </reaction>
</comment>
<comment type="pathway">
    <text>Antibiotic biosynthesis; phenazine biosynthesis.</text>
</comment>
<comment type="similarity">
    <text evidence="1">Belongs to the isochorismatase family.</text>
</comment>